<protein>
    <recommendedName>
        <fullName evidence="1">tRNA dimethylallyltransferase</fullName>
        <ecNumber evidence="1">2.5.1.75</ecNumber>
    </recommendedName>
    <alternativeName>
        <fullName evidence="1">Dimethylallyl diphosphate:tRNA dimethylallyltransferase</fullName>
        <shortName evidence="1">DMAPP:tRNA dimethylallyltransferase</shortName>
        <shortName evidence="1">DMATase</shortName>
    </alternativeName>
    <alternativeName>
        <fullName evidence="1">Isopentenyl-diphosphate:tRNA isopentenyltransferase</fullName>
        <shortName evidence="1">IPP transferase</shortName>
        <shortName evidence="1">IPPT</shortName>
        <shortName evidence="1">IPTase</shortName>
    </alternativeName>
</protein>
<sequence length="323" mass="35493">MNALPPAIFLMGPTAAGKTDLAIELTKVLPCELISVDSALVYRGMDIGTAKPSKTQLAEHPHRLIDILDPAQSYSAADFRSDALAAMAEITARGNIPLLVGGTMLYFKALLDGLADMPAADAQVRAQLEADAQAFGWQALHDQLAVVDPVSAARIHPNDPQRLIRALEVYRVSGMSMTAHREQQTAQSTEAAASGRQQLPYTVANLAIAPADRKVLHQRIALRFEQMLDQGFLDEVLALRSRGDLHSGLPSIRAVGYRQVWDHLDGKLTRDEMQERGIIATRQLAKRQFTWLRSWDDLHWLDSLASDNLSRALKYLGSVSILS</sequence>
<feature type="chain" id="PRO_1000020647" description="tRNA dimethylallyltransferase">
    <location>
        <begin position="1"/>
        <end position="323"/>
    </location>
</feature>
<feature type="region of interest" description="Interaction with substrate tRNA" evidence="1">
    <location>
        <begin position="37"/>
        <end position="40"/>
    </location>
</feature>
<feature type="region of interest" description="Interaction with substrate tRNA" evidence="1">
    <location>
        <begin position="161"/>
        <end position="165"/>
    </location>
</feature>
<feature type="binding site" evidence="1">
    <location>
        <begin position="12"/>
        <end position="19"/>
    </location>
    <ligand>
        <name>ATP</name>
        <dbReference type="ChEBI" id="CHEBI:30616"/>
    </ligand>
</feature>
<feature type="binding site" evidence="1">
    <location>
        <begin position="14"/>
        <end position="19"/>
    </location>
    <ligand>
        <name>substrate</name>
    </ligand>
</feature>
<feature type="site" description="Interaction with substrate tRNA" evidence="1">
    <location>
        <position position="103"/>
    </location>
</feature>
<feature type="site" description="Interaction with substrate tRNA" evidence="1">
    <location>
        <position position="125"/>
    </location>
</feature>
<reference key="1">
    <citation type="journal article" date="2005" name="Proc. Natl. Acad. Sci. U.S.A.">
        <title>Comparison of the complete genome sequences of Pseudomonas syringae pv. syringae B728a and pv. tomato DC3000.</title>
        <authorList>
            <person name="Feil H."/>
            <person name="Feil W.S."/>
            <person name="Chain P."/>
            <person name="Larimer F."/>
            <person name="Dibartolo G."/>
            <person name="Copeland A."/>
            <person name="Lykidis A."/>
            <person name="Trong S."/>
            <person name="Nolan M."/>
            <person name="Goltsman E."/>
            <person name="Thiel J."/>
            <person name="Malfatti S."/>
            <person name="Loper J.E."/>
            <person name="Lapidus A."/>
            <person name="Detter J.C."/>
            <person name="Land M."/>
            <person name="Richardson P.M."/>
            <person name="Kyrpides N.C."/>
            <person name="Ivanova N."/>
            <person name="Lindow S.E."/>
        </authorList>
    </citation>
    <scope>NUCLEOTIDE SEQUENCE [LARGE SCALE GENOMIC DNA]</scope>
    <source>
        <strain>B728a</strain>
    </source>
</reference>
<dbReference type="EC" id="2.5.1.75" evidence="1"/>
<dbReference type="EMBL" id="CP000075">
    <property type="protein sequence ID" value="AAY35641.1"/>
    <property type="molecule type" value="Genomic_DNA"/>
</dbReference>
<dbReference type="RefSeq" id="WP_011266496.1">
    <property type="nucleotide sequence ID" value="NC_007005.1"/>
</dbReference>
<dbReference type="RefSeq" id="YP_233679.1">
    <property type="nucleotide sequence ID" value="NC_007005.1"/>
</dbReference>
<dbReference type="SMR" id="Q4ZYY1"/>
<dbReference type="STRING" id="205918.Psyr_0571"/>
<dbReference type="KEGG" id="psb:Psyr_0571"/>
<dbReference type="PATRIC" id="fig|205918.7.peg.594"/>
<dbReference type="eggNOG" id="COG0324">
    <property type="taxonomic scope" value="Bacteria"/>
</dbReference>
<dbReference type="HOGENOM" id="CLU_032616_0_0_6"/>
<dbReference type="OrthoDB" id="9776390at2"/>
<dbReference type="Proteomes" id="UP000000426">
    <property type="component" value="Chromosome"/>
</dbReference>
<dbReference type="GO" id="GO:0005524">
    <property type="term" value="F:ATP binding"/>
    <property type="evidence" value="ECO:0007669"/>
    <property type="project" value="UniProtKB-UniRule"/>
</dbReference>
<dbReference type="GO" id="GO:0052381">
    <property type="term" value="F:tRNA dimethylallyltransferase activity"/>
    <property type="evidence" value="ECO:0007669"/>
    <property type="project" value="UniProtKB-UniRule"/>
</dbReference>
<dbReference type="GO" id="GO:0006400">
    <property type="term" value="P:tRNA modification"/>
    <property type="evidence" value="ECO:0007669"/>
    <property type="project" value="TreeGrafter"/>
</dbReference>
<dbReference type="FunFam" id="1.10.20.140:FF:000001">
    <property type="entry name" value="tRNA dimethylallyltransferase"/>
    <property type="match status" value="1"/>
</dbReference>
<dbReference type="Gene3D" id="1.10.20.140">
    <property type="match status" value="1"/>
</dbReference>
<dbReference type="Gene3D" id="3.40.50.300">
    <property type="entry name" value="P-loop containing nucleotide triphosphate hydrolases"/>
    <property type="match status" value="1"/>
</dbReference>
<dbReference type="HAMAP" id="MF_00185">
    <property type="entry name" value="IPP_trans"/>
    <property type="match status" value="1"/>
</dbReference>
<dbReference type="InterPro" id="IPR039657">
    <property type="entry name" value="Dimethylallyltransferase"/>
</dbReference>
<dbReference type="InterPro" id="IPR018022">
    <property type="entry name" value="IPT"/>
</dbReference>
<dbReference type="InterPro" id="IPR027417">
    <property type="entry name" value="P-loop_NTPase"/>
</dbReference>
<dbReference type="NCBIfam" id="TIGR00174">
    <property type="entry name" value="miaA"/>
    <property type="match status" value="1"/>
</dbReference>
<dbReference type="PANTHER" id="PTHR11088">
    <property type="entry name" value="TRNA DIMETHYLALLYLTRANSFERASE"/>
    <property type="match status" value="1"/>
</dbReference>
<dbReference type="PANTHER" id="PTHR11088:SF60">
    <property type="entry name" value="TRNA DIMETHYLALLYLTRANSFERASE"/>
    <property type="match status" value="1"/>
</dbReference>
<dbReference type="Pfam" id="PF01715">
    <property type="entry name" value="IPPT"/>
    <property type="match status" value="1"/>
</dbReference>
<dbReference type="SUPFAM" id="SSF52540">
    <property type="entry name" value="P-loop containing nucleoside triphosphate hydrolases"/>
    <property type="match status" value="1"/>
</dbReference>
<keyword id="KW-0067">ATP-binding</keyword>
<keyword id="KW-0460">Magnesium</keyword>
<keyword id="KW-0547">Nucleotide-binding</keyword>
<keyword id="KW-0808">Transferase</keyword>
<keyword id="KW-0819">tRNA processing</keyword>
<organism>
    <name type="scientific">Pseudomonas syringae pv. syringae (strain B728a)</name>
    <dbReference type="NCBI Taxonomy" id="205918"/>
    <lineage>
        <taxon>Bacteria</taxon>
        <taxon>Pseudomonadati</taxon>
        <taxon>Pseudomonadota</taxon>
        <taxon>Gammaproteobacteria</taxon>
        <taxon>Pseudomonadales</taxon>
        <taxon>Pseudomonadaceae</taxon>
        <taxon>Pseudomonas</taxon>
        <taxon>Pseudomonas syringae</taxon>
    </lineage>
</organism>
<comment type="function">
    <text evidence="1">Catalyzes the transfer of a dimethylallyl group onto the adenine at position 37 in tRNAs that read codons beginning with uridine, leading to the formation of N6-(dimethylallyl)adenosine (i(6)A).</text>
</comment>
<comment type="catalytic activity">
    <reaction evidence="1">
        <text>adenosine(37) in tRNA + dimethylallyl diphosphate = N(6)-dimethylallyladenosine(37) in tRNA + diphosphate</text>
        <dbReference type="Rhea" id="RHEA:26482"/>
        <dbReference type="Rhea" id="RHEA-COMP:10162"/>
        <dbReference type="Rhea" id="RHEA-COMP:10375"/>
        <dbReference type="ChEBI" id="CHEBI:33019"/>
        <dbReference type="ChEBI" id="CHEBI:57623"/>
        <dbReference type="ChEBI" id="CHEBI:74411"/>
        <dbReference type="ChEBI" id="CHEBI:74415"/>
        <dbReference type="EC" id="2.5.1.75"/>
    </reaction>
</comment>
<comment type="cofactor">
    <cofactor evidence="1">
        <name>Mg(2+)</name>
        <dbReference type="ChEBI" id="CHEBI:18420"/>
    </cofactor>
</comment>
<comment type="subunit">
    <text evidence="1">Monomer.</text>
</comment>
<comment type="similarity">
    <text evidence="1">Belongs to the IPP transferase family.</text>
</comment>
<accession>Q4ZYY1</accession>
<evidence type="ECO:0000255" key="1">
    <source>
        <dbReference type="HAMAP-Rule" id="MF_00185"/>
    </source>
</evidence>
<name>MIAA_PSEU2</name>
<gene>
    <name evidence="1" type="primary">miaA</name>
    <name type="ordered locus">Psyr_0571</name>
</gene>
<proteinExistence type="inferred from homology"/>